<gene>
    <name type="primary">Nsmce1</name>
</gene>
<keyword id="KW-0158">Chromosome</keyword>
<keyword id="KW-0227">DNA damage</keyword>
<keyword id="KW-0233">DNA recombination</keyword>
<keyword id="KW-0234">DNA repair</keyword>
<keyword id="KW-0479">Metal-binding</keyword>
<keyword id="KW-0539">Nucleus</keyword>
<keyword id="KW-1185">Reference proteome</keyword>
<keyword id="KW-0779">Telomere</keyword>
<keyword id="KW-0808">Transferase</keyword>
<keyword id="KW-0832">Ubl conjugation</keyword>
<keyword id="KW-0833">Ubl conjugation pathway</keyword>
<keyword id="KW-0862">Zinc</keyword>
<keyword id="KW-0863">Zinc-finger</keyword>
<accession>Q499U6</accession>
<protein>
    <recommendedName>
        <fullName>Non-structural maintenance of chromosomes element 1 homolog</fullName>
        <shortName>Non-SMC element 1 homolog</shortName>
        <ecNumber evidence="1">2.3.2.27</ecNumber>
    </recommendedName>
</protein>
<feature type="chain" id="PRO_0000270947" description="Non-structural maintenance of chromosomes element 1 homolog">
    <location>
        <begin position="1"/>
        <end position="266"/>
    </location>
</feature>
<feature type="zinc finger region" description="RING-type; atypical" evidence="2">
    <location>
        <begin position="191"/>
        <end position="232"/>
    </location>
</feature>
<feature type="region of interest" description="Interaction with NSMCE3" evidence="1">
    <location>
        <begin position="1"/>
        <end position="102"/>
    </location>
</feature>
<feature type="region of interest" description="Disordered" evidence="3">
    <location>
        <begin position="246"/>
        <end position="266"/>
    </location>
</feature>
<feature type="compositionally biased region" description="Basic residues" evidence="3">
    <location>
        <begin position="256"/>
        <end position="266"/>
    </location>
</feature>
<organism>
    <name type="scientific">Rattus norvegicus</name>
    <name type="common">Rat</name>
    <dbReference type="NCBI Taxonomy" id="10116"/>
    <lineage>
        <taxon>Eukaryota</taxon>
        <taxon>Metazoa</taxon>
        <taxon>Chordata</taxon>
        <taxon>Craniata</taxon>
        <taxon>Vertebrata</taxon>
        <taxon>Euteleostomi</taxon>
        <taxon>Mammalia</taxon>
        <taxon>Eutheria</taxon>
        <taxon>Euarchontoglires</taxon>
        <taxon>Glires</taxon>
        <taxon>Rodentia</taxon>
        <taxon>Myomorpha</taxon>
        <taxon>Muroidea</taxon>
        <taxon>Muridae</taxon>
        <taxon>Murinae</taxon>
        <taxon>Rattus</taxon>
    </lineage>
</organism>
<sequence length="266" mass="30702">MQGSTRRAGAMTDVHRRFLQLLMTHGVLEEWEVRRLQNHCYKVHDRNATVDKLEDFINNINSVLESLYIEIKKGITEDDGRPIYALVNLATTSVSKMATDFAENELDLFRKALELIVDSETGFASSTNILNLVDQLKGKKMRKKEAEQVLQKFVQSKWLIEKEGEFTLHGRAILEMEQFIRESYPDAVKMCNICHSLLIQGQSCETCGIRMHLPCVAKYFQSTAEPRCPHCNDYWPHDIPEVFDPEKEREAGISKSSRKSLRTRQH</sequence>
<name>NSE1_RAT</name>
<comment type="function">
    <text evidence="1">RING-type zinc finger-containing E3 ubiquitin ligase that assembles with melanoma antigen protein (MAGE) to catalyze the direct transfer of ubiquitin from E2 ubiquitin-conjugating enzyme to a specific substrate. Within MAGE-RING ubiquitin ligase complex, MAGE stimulates and specifies ubiquitin ligase activity likely through recruitment and/or stabilization of the E2 ubiquitin-conjugating enzyme at the E3:substrate complex. Involved in maintenance of genome integrity, DNA damage response and DNA repair. NSMCE3/MAGEG1 and NSMCE1 ubiquitin ligase are components of SMC5-SMC6 complex and may positively regulate homologous recombination-mediated DNA repair.</text>
</comment>
<comment type="catalytic activity">
    <reaction evidence="1">
        <text>S-ubiquitinyl-[E2 ubiquitin-conjugating enzyme]-L-cysteine + [acceptor protein]-L-lysine = [E2 ubiquitin-conjugating enzyme]-L-cysteine + N(6)-ubiquitinyl-[acceptor protein]-L-lysine.</text>
        <dbReference type="EC" id="2.3.2.27"/>
    </reaction>
</comment>
<comment type="subunit">
    <text evidence="1">Component of the SMC5-SMC6 complex which consists at least of SMC5, SMC6, NSMCE2, NSMCE1, NSMCE4A or EID3 and NSMCE3. NSMCE1, NSMCE4A or EID3 and NSMCE3 probably form a subcomplex that bridges the head domains of the SMC5-SMC6 heterodimer. Interacts with NSMCE3.</text>
</comment>
<comment type="subcellular location">
    <subcellularLocation>
        <location evidence="1">Nucleus</location>
    </subcellularLocation>
    <subcellularLocation>
        <location evidence="1">Chromosome</location>
        <location evidence="1">Telomere</location>
    </subcellularLocation>
</comment>
<comment type="PTM">
    <text evidence="1">Ubiquitinated.</text>
</comment>
<comment type="similarity">
    <text evidence="4">Belongs to the NSE1 family.</text>
</comment>
<comment type="sequence caution" evidence="4">
    <conflict type="erroneous initiation">
        <sequence resource="EMBL-CDS" id="AAH99757"/>
    </conflict>
    <text>Extended N-terminus.</text>
</comment>
<proteinExistence type="evidence at transcript level"/>
<dbReference type="EC" id="2.3.2.27" evidence="1"/>
<dbReference type="EMBL" id="BC099757">
    <property type="protein sequence ID" value="AAH99757.1"/>
    <property type="status" value="ALT_INIT"/>
    <property type="molecule type" value="mRNA"/>
</dbReference>
<dbReference type="RefSeq" id="NP_001034700.1">
    <property type="nucleotide sequence ID" value="NM_001039611.1"/>
</dbReference>
<dbReference type="RefSeq" id="XP_006230353.1">
    <property type="nucleotide sequence ID" value="XM_006230291.5"/>
</dbReference>
<dbReference type="RefSeq" id="XP_006230354.1">
    <property type="nucleotide sequence ID" value="XM_006230292.3"/>
</dbReference>
<dbReference type="RefSeq" id="XP_006230355.1">
    <property type="nucleotide sequence ID" value="XM_006230293.5"/>
</dbReference>
<dbReference type="RefSeq" id="XP_038938809.1">
    <property type="nucleotide sequence ID" value="XM_039082881.2"/>
</dbReference>
<dbReference type="RefSeq" id="XP_063123727.1">
    <property type="nucleotide sequence ID" value="XM_063267657.1"/>
</dbReference>
<dbReference type="SMR" id="Q499U6"/>
<dbReference type="FunCoup" id="Q499U6">
    <property type="interactions" value="2186"/>
</dbReference>
<dbReference type="STRING" id="10116.ENSRNOP00000051912"/>
<dbReference type="PhosphoSitePlus" id="Q499U6"/>
<dbReference type="PaxDb" id="10116-ENSRNOP00000051912"/>
<dbReference type="GeneID" id="361645"/>
<dbReference type="KEGG" id="rno:361645"/>
<dbReference type="UCSC" id="RGD:1307760">
    <property type="organism name" value="rat"/>
</dbReference>
<dbReference type="AGR" id="RGD:1307760"/>
<dbReference type="CTD" id="197370"/>
<dbReference type="RGD" id="1307760">
    <property type="gene designation" value="Nsmce1"/>
</dbReference>
<dbReference type="VEuPathDB" id="HostDB:ENSRNOG00000015218"/>
<dbReference type="eggNOG" id="KOG4718">
    <property type="taxonomic scope" value="Eukaryota"/>
</dbReference>
<dbReference type="HOGENOM" id="CLU_045153_3_1_1"/>
<dbReference type="InParanoid" id="Q499U6"/>
<dbReference type="OrthoDB" id="185455at2759"/>
<dbReference type="PhylomeDB" id="Q499U6"/>
<dbReference type="TreeFam" id="TF314721"/>
<dbReference type="Reactome" id="R-RNO-3108214">
    <property type="pathway name" value="SUMOylation of DNA damage response and repair proteins"/>
</dbReference>
<dbReference type="PRO" id="PR:Q499U6"/>
<dbReference type="Proteomes" id="UP000002494">
    <property type="component" value="Chromosome 1"/>
</dbReference>
<dbReference type="Bgee" id="ENSRNOG00000015218">
    <property type="expression patterns" value="Expressed in testis and 20 other cell types or tissues"/>
</dbReference>
<dbReference type="ExpressionAtlas" id="Q499U6">
    <property type="expression patterns" value="baseline and differential"/>
</dbReference>
<dbReference type="GO" id="GO:0000775">
    <property type="term" value="C:chromosome, centromeric region"/>
    <property type="evidence" value="ECO:0000266"/>
    <property type="project" value="RGD"/>
</dbReference>
<dbReference type="GO" id="GO:0000781">
    <property type="term" value="C:chromosome, telomeric region"/>
    <property type="evidence" value="ECO:0007669"/>
    <property type="project" value="UniProtKB-SubCell"/>
</dbReference>
<dbReference type="GO" id="GO:0097431">
    <property type="term" value="C:mitotic spindle pole"/>
    <property type="evidence" value="ECO:0000266"/>
    <property type="project" value="RGD"/>
</dbReference>
<dbReference type="GO" id="GO:0005634">
    <property type="term" value="C:nucleus"/>
    <property type="evidence" value="ECO:0000266"/>
    <property type="project" value="RGD"/>
</dbReference>
<dbReference type="GO" id="GO:0030915">
    <property type="term" value="C:Smc5-Smc6 complex"/>
    <property type="evidence" value="ECO:0000250"/>
    <property type="project" value="UniProtKB"/>
</dbReference>
<dbReference type="GO" id="GO:0046983">
    <property type="term" value="F:protein dimerization activity"/>
    <property type="evidence" value="ECO:0000250"/>
    <property type="project" value="UniProtKB"/>
</dbReference>
<dbReference type="GO" id="GO:0061630">
    <property type="term" value="F:ubiquitin protein ligase activity"/>
    <property type="evidence" value="ECO:0000250"/>
    <property type="project" value="UniProtKB"/>
</dbReference>
<dbReference type="GO" id="GO:0004842">
    <property type="term" value="F:ubiquitin-protein transferase activity"/>
    <property type="evidence" value="ECO:0000318"/>
    <property type="project" value="GO_Central"/>
</dbReference>
<dbReference type="GO" id="GO:0008270">
    <property type="term" value="F:zinc ion binding"/>
    <property type="evidence" value="ECO:0007669"/>
    <property type="project" value="UniProtKB-KW"/>
</dbReference>
<dbReference type="GO" id="GO:0006974">
    <property type="term" value="P:DNA damage response"/>
    <property type="evidence" value="ECO:0000250"/>
    <property type="project" value="UniProtKB"/>
</dbReference>
<dbReference type="GO" id="GO:0000724">
    <property type="term" value="P:double-strand break repair via homologous recombination"/>
    <property type="evidence" value="ECO:0000318"/>
    <property type="project" value="GO_Central"/>
</dbReference>
<dbReference type="CDD" id="cd16493">
    <property type="entry name" value="RING-CH-C4HC3_NSE1"/>
    <property type="match status" value="1"/>
</dbReference>
<dbReference type="FunFam" id="1.10.10.10:FF:000270">
    <property type="entry name" value="Non-structural maintenance of chromosomes element 1 homolog"/>
    <property type="match status" value="1"/>
</dbReference>
<dbReference type="FunFam" id="3.90.1150.220:FF:000001">
    <property type="entry name" value="Non-structural maintenance of chromosomes element 1 homolog"/>
    <property type="match status" value="1"/>
</dbReference>
<dbReference type="FunFam" id="3.30.40.10:FF:000298">
    <property type="entry name" value="non-structural maintenance of chromosomes element 1 homolog"/>
    <property type="match status" value="1"/>
</dbReference>
<dbReference type="Gene3D" id="3.90.1150.220">
    <property type="match status" value="1"/>
</dbReference>
<dbReference type="Gene3D" id="1.10.10.10">
    <property type="entry name" value="Winged helix-like DNA-binding domain superfamily/Winged helix DNA-binding domain"/>
    <property type="match status" value="1"/>
</dbReference>
<dbReference type="Gene3D" id="3.30.40.10">
    <property type="entry name" value="Zinc/RING finger domain, C3HC4 (zinc finger)"/>
    <property type="match status" value="1"/>
</dbReference>
<dbReference type="InterPro" id="IPR011513">
    <property type="entry name" value="Nse1"/>
</dbReference>
<dbReference type="InterPro" id="IPR014857">
    <property type="entry name" value="Nse1_RING_C4HC3-type"/>
</dbReference>
<dbReference type="InterPro" id="IPR002219">
    <property type="entry name" value="PE/DAG-bd"/>
</dbReference>
<dbReference type="InterPro" id="IPR036388">
    <property type="entry name" value="WH-like_DNA-bd_sf"/>
</dbReference>
<dbReference type="InterPro" id="IPR001841">
    <property type="entry name" value="Znf_RING"/>
</dbReference>
<dbReference type="InterPro" id="IPR013083">
    <property type="entry name" value="Znf_RING/FYVE/PHD"/>
</dbReference>
<dbReference type="PANTHER" id="PTHR20973">
    <property type="entry name" value="NON-SMC ELEMENT 1-RELATED"/>
    <property type="match status" value="1"/>
</dbReference>
<dbReference type="PANTHER" id="PTHR20973:SF0">
    <property type="entry name" value="NON-STRUCTURAL MAINTENANCE OF CHROMOSOMES ELEMENT 1 HOMOLOG"/>
    <property type="match status" value="1"/>
</dbReference>
<dbReference type="Pfam" id="PF07574">
    <property type="entry name" value="SMC_Nse1"/>
    <property type="match status" value="1"/>
</dbReference>
<dbReference type="Pfam" id="PF08746">
    <property type="entry name" value="zf-RING-like"/>
    <property type="match status" value="1"/>
</dbReference>
<dbReference type="SUPFAM" id="SSF57850">
    <property type="entry name" value="RING/U-box"/>
    <property type="match status" value="1"/>
</dbReference>
<dbReference type="PROSITE" id="PS50089">
    <property type="entry name" value="ZF_RING_2"/>
    <property type="match status" value="1"/>
</dbReference>
<evidence type="ECO:0000250" key="1">
    <source>
        <dbReference type="UniProtKB" id="Q8WV22"/>
    </source>
</evidence>
<evidence type="ECO:0000255" key="2">
    <source>
        <dbReference type="PROSITE-ProRule" id="PRU00175"/>
    </source>
</evidence>
<evidence type="ECO:0000256" key="3">
    <source>
        <dbReference type="SAM" id="MobiDB-lite"/>
    </source>
</evidence>
<evidence type="ECO:0000305" key="4"/>
<reference key="1">
    <citation type="journal article" date="2004" name="Genome Res.">
        <title>The status, quality, and expansion of the NIH full-length cDNA project: the Mammalian Gene Collection (MGC).</title>
        <authorList>
            <consortium name="The MGC Project Team"/>
        </authorList>
    </citation>
    <scope>NUCLEOTIDE SEQUENCE [LARGE SCALE MRNA]</scope>
    <source>
        <tissue>Prostate</tissue>
    </source>
</reference>